<proteinExistence type="inferred from homology"/>
<protein>
    <recommendedName>
        <fullName evidence="1">Ion-translocating oxidoreductase complex subunit A</fullName>
        <ecNumber evidence="1">7.-.-.-</ecNumber>
    </recommendedName>
    <alternativeName>
        <fullName evidence="1">Rnf electron transport complex subunit A</fullName>
    </alternativeName>
</protein>
<reference key="1">
    <citation type="submission" date="2007-07" db="EMBL/GenBank/DDBJ databases">
        <title>Complete sequence of chromosome of Shewanella baltica OS185.</title>
        <authorList>
            <consortium name="US DOE Joint Genome Institute"/>
            <person name="Copeland A."/>
            <person name="Lucas S."/>
            <person name="Lapidus A."/>
            <person name="Barry K."/>
            <person name="Glavina del Rio T."/>
            <person name="Dalin E."/>
            <person name="Tice H."/>
            <person name="Pitluck S."/>
            <person name="Sims D."/>
            <person name="Brettin T."/>
            <person name="Bruce D."/>
            <person name="Detter J.C."/>
            <person name="Han C."/>
            <person name="Schmutz J."/>
            <person name="Larimer F."/>
            <person name="Land M."/>
            <person name="Hauser L."/>
            <person name="Kyrpides N."/>
            <person name="Mikhailova N."/>
            <person name="Brettar I."/>
            <person name="Rodrigues J."/>
            <person name="Konstantinidis K."/>
            <person name="Tiedje J."/>
            <person name="Richardson P."/>
        </authorList>
    </citation>
    <scope>NUCLEOTIDE SEQUENCE [LARGE SCALE GENOMIC DNA]</scope>
    <source>
        <strain>OS185</strain>
    </source>
</reference>
<accession>A6WN18</accession>
<evidence type="ECO:0000255" key="1">
    <source>
        <dbReference type="HAMAP-Rule" id="MF_00459"/>
    </source>
</evidence>
<organism>
    <name type="scientific">Shewanella baltica (strain OS185)</name>
    <dbReference type="NCBI Taxonomy" id="402882"/>
    <lineage>
        <taxon>Bacteria</taxon>
        <taxon>Pseudomonadati</taxon>
        <taxon>Pseudomonadota</taxon>
        <taxon>Gammaproteobacteria</taxon>
        <taxon>Alteromonadales</taxon>
        <taxon>Shewanellaceae</taxon>
        <taxon>Shewanella</taxon>
    </lineage>
</organism>
<keyword id="KW-0997">Cell inner membrane</keyword>
<keyword id="KW-1003">Cell membrane</keyword>
<keyword id="KW-0249">Electron transport</keyword>
<keyword id="KW-0472">Membrane</keyword>
<keyword id="KW-1278">Translocase</keyword>
<keyword id="KW-0812">Transmembrane</keyword>
<keyword id="KW-1133">Transmembrane helix</keyword>
<keyword id="KW-0813">Transport</keyword>
<feature type="chain" id="PRO_1000013547" description="Ion-translocating oxidoreductase complex subunit A">
    <location>
        <begin position="1"/>
        <end position="192"/>
    </location>
</feature>
<feature type="transmembrane region" description="Helical" evidence="1">
    <location>
        <begin position="5"/>
        <end position="25"/>
    </location>
</feature>
<feature type="transmembrane region" description="Helical" evidence="1">
    <location>
        <begin position="39"/>
        <end position="59"/>
    </location>
</feature>
<feature type="transmembrane region" description="Helical" evidence="1">
    <location>
        <begin position="65"/>
        <end position="85"/>
    </location>
</feature>
<feature type="transmembrane region" description="Helical" evidence="1">
    <location>
        <begin position="102"/>
        <end position="122"/>
    </location>
</feature>
<feature type="transmembrane region" description="Helical" evidence="1">
    <location>
        <begin position="134"/>
        <end position="154"/>
    </location>
</feature>
<feature type="transmembrane region" description="Helical" evidence="1">
    <location>
        <begin position="171"/>
        <end position="191"/>
    </location>
</feature>
<gene>
    <name evidence="1" type="primary">rnfA</name>
    <name type="ordered locus">Shew185_2065</name>
</gene>
<sequence>MTEYLLLLISTVLVNNFVLVKFLGLCPFMGVSSKLESAIGMSMATTFVLTLASILSYLVNQYLLLPFDLSYLRTMSFILVIAVVVQFTEMVVQKTSAALHRALGIYLPLITTNCAVLGVALLNVNEKHDFIQSAIYGFGAALGFSLVLILFSAMRERLAAADVPLPFKGGAIAMITAGLMSLAFMGFTGLVK</sequence>
<name>RNFA_SHEB8</name>
<comment type="function">
    <text evidence="1">Part of a membrane-bound complex that couples electron transfer with translocation of ions across the membrane.</text>
</comment>
<comment type="subunit">
    <text evidence="1">The complex is composed of six subunits: RnfA, RnfB, RnfC, RnfD, RnfE and RnfG.</text>
</comment>
<comment type="subcellular location">
    <subcellularLocation>
        <location evidence="1">Cell inner membrane</location>
        <topology evidence="1">Multi-pass membrane protein</topology>
    </subcellularLocation>
</comment>
<comment type="similarity">
    <text evidence="1">Belongs to the NqrDE/RnfAE family.</text>
</comment>
<dbReference type="EC" id="7.-.-.-" evidence="1"/>
<dbReference type="EMBL" id="CP000753">
    <property type="protein sequence ID" value="ABS08207.1"/>
    <property type="molecule type" value="Genomic_DNA"/>
</dbReference>
<dbReference type="SMR" id="A6WN18"/>
<dbReference type="KEGG" id="sbm:Shew185_2065"/>
<dbReference type="HOGENOM" id="CLU_095255_1_0_6"/>
<dbReference type="GO" id="GO:0005886">
    <property type="term" value="C:plasma membrane"/>
    <property type="evidence" value="ECO:0007669"/>
    <property type="project" value="UniProtKB-SubCell"/>
</dbReference>
<dbReference type="GO" id="GO:0022900">
    <property type="term" value="P:electron transport chain"/>
    <property type="evidence" value="ECO:0007669"/>
    <property type="project" value="UniProtKB-UniRule"/>
</dbReference>
<dbReference type="HAMAP" id="MF_00459">
    <property type="entry name" value="RsxA_RnfA"/>
    <property type="match status" value="1"/>
</dbReference>
<dbReference type="InterPro" id="IPR011293">
    <property type="entry name" value="Ion_transpt_RnfA/RsxA"/>
</dbReference>
<dbReference type="InterPro" id="IPR003667">
    <property type="entry name" value="NqrDE/RnfAE"/>
</dbReference>
<dbReference type="InterPro" id="IPR050133">
    <property type="entry name" value="NqrDE/RnfAE_oxidrdctase"/>
</dbReference>
<dbReference type="NCBIfam" id="NF003481">
    <property type="entry name" value="PRK05151.1"/>
    <property type="match status" value="1"/>
</dbReference>
<dbReference type="NCBIfam" id="TIGR01943">
    <property type="entry name" value="rnfA"/>
    <property type="match status" value="1"/>
</dbReference>
<dbReference type="PANTHER" id="PTHR30335">
    <property type="entry name" value="INTEGRAL MEMBRANE PROTEIN OF SOXR-REDUCING COMPLEX"/>
    <property type="match status" value="1"/>
</dbReference>
<dbReference type="PANTHER" id="PTHR30335:SF0">
    <property type="entry name" value="ION-TRANSLOCATING OXIDOREDUCTASE COMPLEX SUBUNIT A"/>
    <property type="match status" value="1"/>
</dbReference>
<dbReference type="Pfam" id="PF02508">
    <property type="entry name" value="Rnf-Nqr"/>
    <property type="match status" value="1"/>
</dbReference>
<dbReference type="PIRSF" id="PIRSF006102">
    <property type="entry name" value="NQR_DE"/>
    <property type="match status" value="1"/>
</dbReference>